<gene>
    <name evidence="2" type="primary">tuf</name>
    <name type="ordered locus">SpyM51355</name>
</gene>
<evidence type="ECO:0000250" key="1"/>
<evidence type="ECO:0000255" key="2">
    <source>
        <dbReference type="HAMAP-Rule" id="MF_00118"/>
    </source>
</evidence>
<organism>
    <name type="scientific">Streptococcus pyogenes serotype M5 (strain Manfredo)</name>
    <dbReference type="NCBI Taxonomy" id="160491"/>
    <lineage>
        <taxon>Bacteria</taxon>
        <taxon>Bacillati</taxon>
        <taxon>Bacillota</taxon>
        <taxon>Bacilli</taxon>
        <taxon>Lactobacillales</taxon>
        <taxon>Streptococcaceae</taxon>
        <taxon>Streptococcus</taxon>
    </lineage>
</organism>
<name>EFTU_STRPG</name>
<accession>A2RFQ4</accession>
<dbReference type="EC" id="3.6.5.3" evidence="2"/>
<dbReference type="EMBL" id="AM295007">
    <property type="protein sequence ID" value="CAM30683.1"/>
    <property type="molecule type" value="Genomic_DNA"/>
</dbReference>
<dbReference type="RefSeq" id="WP_002990541.1">
    <property type="nucleotide sequence ID" value="NC_009332.1"/>
</dbReference>
<dbReference type="SMR" id="A2RFQ4"/>
<dbReference type="KEGG" id="spf:SpyM51355"/>
<dbReference type="HOGENOM" id="CLU_007265_0_1_9"/>
<dbReference type="GO" id="GO:0005829">
    <property type="term" value="C:cytosol"/>
    <property type="evidence" value="ECO:0007669"/>
    <property type="project" value="TreeGrafter"/>
</dbReference>
<dbReference type="GO" id="GO:0005525">
    <property type="term" value="F:GTP binding"/>
    <property type="evidence" value="ECO:0007669"/>
    <property type="project" value="UniProtKB-UniRule"/>
</dbReference>
<dbReference type="GO" id="GO:0003924">
    <property type="term" value="F:GTPase activity"/>
    <property type="evidence" value="ECO:0007669"/>
    <property type="project" value="InterPro"/>
</dbReference>
<dbReference type="GO" id="GO:0003746">
    <property type="term" value="F:translation elongation factor activity"/>
    <property type="evidence" value="ECO:0007669"/>
    <property type="project" value="UniProtKB-UniRule"/>
</dbReference>
<dbReference type="CDD" id="cd01884">
    <property type="entry name" value="EF_Tu"/>
    <property type="match status" value="1"/>
</dbReference>
<dbReference type="CDD" id="cd03697">
    <property type="entry name" value="EFTU_II"/>
    <property type="match status" value="1"/>
</dbReference>
<dbReference type="CDD" id="cd03707">
    <property type="entry name" value="EFTU_III"/>
    <property type="match status" value="1"/>
</dbReference>
<dbReference type="FunFam" id="2.40.30.10:FF:000001">
    <property type="entry name" value="Elongation factor Tu"/>
    <property type="match status" value="1"/>
</dbReference>
<dbReference type="FunFam" id="3.40.50.300:FF:000003">
    <property type="entry name" value="Elongation factor Tu"/>
    <property type="match status" value="1"/>
</dbReference>
<dbReference type="Gene3D" id="3.40.50.300">
    <property type="entry name" value="P-loop containing nucleotide triphosphate hydrolases"/>
    <property type="match status" value="1"/>
</dbReference>
<dbReference type="Gene3D" id="2.40.30.10">
    <property type="entry name" value="Translation factors"/>
    <property type="match status" value="2"/>
</dbReference>
<dbReference type="HAMAP" id="MF_00118_B">
    <property type="entry name" value="EF_Tu_B"/>
    <property type="match status" value="1"/>
</dbReference>
<dbReference type="InterPro" id="IPR041709">
    <property type="entry name" value="EF-Tu_GTP-bd"/>
</dbReference>
<dbReference type="InterPro" id="IPR050055">
    <property type="entry name" value="EF-Tu_GTPase"/>
</dbReference>
<dbReference type="InterPro" id="IPR004161">
    <property type="entry name" value="EFTu-like_2"/>
</dbReference>
<dbReference type="InterPro" id="IPR033720">
    <property type="entry name" value="EFTU_2"/>
</dbReference>
<dbReference type="InterPro" id="IPR031157">
    <property type="entry name" value="G_TR_CS"/>
</dbReference>
<dbReference type="InterPro" id="IPR027417">
    <property type="entry name" value="P-loop_NTPase"/>
</dbReference>
<dbReference type="InterPro" id="IPR005225">
    <property type="entry name" value="Small_GTP-bd"/>
</dbReference>
<dbReference type="InterPro" id="IPR000795">
    <property type="entry name" value="T_Tr_GTP-bd_dom"/>
</dbReference>
<dbReference type="InterPro" id="IPR009000">
    <property type="entry name" value="Transl_B-barrel_sf"/>
</dbReference>
<dbReference type="InterPro" id="IPR009001">
    <property type="entry name" value="Transl_elong_EF1A/Init_IF2_C"/>
</dbReference>
<dbReference type="InterPro" id="IPR004541">
    <property type="entry name" value="Transl_elong_EFTu/EF1A_bac/org"/>
</dbReference>
<dbReference type="InterPro" id="IPR004160">
    <property type="entry name" value="Transl_elong_EFTu/EF1A_C"/>
</dbReference>
<dbReference type="NCBIfam" id="TIGR00485">
    <property type="entry name" value="EF-Tu"/>
    <property type="match status" value="1"/>
</dbReference>
<dbReference type="NCBIfam" id="NF000766">
    <property type="entry name" value="PRK00049.1"/>
    <property type="match status" value="1"/>
</dbReference>
<dbReference type="NCBIfam" id="NF009372">
    <property type="entry name" value="PRK12735.1"/>
    <property type="match status" value="1"/>
</dbReference>
<dbReference type="NCBIfam" id="NF009373">
    <property type="entry name" value="PRK12736.1"/>
    <property type="match status" value="1"/>
</dbReference>
<dbReference type="NCBIfam" id="TIGR00231">
    <property type="entry name" value="small_GTP"/>
    <property type="match status" value="1"/>
</dbReference>
<dbReference type="PANTHER" id="PTHR43721:SF22">
    <property type="entry name" value="ELONGATION FACTOR TU, MITOCHONDRIAL"/>
    <property type="match status" value="1"/>
</dbReference>
<dbReference type="PANTHER" id="PTHR43721">
    <property type="entry name" value="ELONGATION FACTOR TU-RELATED"/>
    <property type="match status" value="1"/>
</dbReference>
<dbReference type="Pfam" id="PF00009">
    <property type="entry name" value="GTP_EFTU"/>
    <property type="match status" value="1"/>
</dbReference>
<dbReference type="Pfam" id="PF03144">
    <property type="entry name" value="GTP_EFTU_D2"/>
    <property type="match status" value="1"/>
</dbReference>
<dbReference type="Pfam" id="PF03143">
    <property type="entry name" value="GTP_EFTU_D3"/>
    <property type="match status" value="1"/>
</dbReference>
<dbReference type="PRINTS" id="PR00315">
    <property type="entry name" value="ELONGATNFCT"/>
</dbReference>
<dbReference type="SUPFAM" id="SSF50465">
    <property type="entry name" value="EF-Tu/eEF-1alpha/eIF2-gamma C-terminal domain"/>
    <property type="match status" value="1"/>
</dbReference>
<dbReference type="SUPFAM" id="SSF52540">
    <property type="entry name" value="P-loop containing nucleoside triphosphate hydrolases"/>
    <property type="match status" value="1"/>
</dbReference>
<dbReference type="SUPFAM" id="SSF50447">
    <property type="entry name" value="Translation proteins"/>
    <property type="match status" value="1"/>
</dbReference>
<dbReference type="PROSITE" id="PS00301">
    <property type="entry name" value="G_TR_1"/>
    <property type="match status" value="1"/>
</dbReference>
<dbReference type="PROSITE" id="PS51722">
    <property type="entry name" value="G_TR_2"/>
    <property type="match status" value="1"/>
</dbReference>
<reference key="1">
    <citation type="journal article" date="2007" name="J. Bacteriol.">
        <title>Complete genome of acute rheumatic fever-associated serotype M5 Streptococcus pyogenes strain Manfredo.</title>
        <authorList>
            <person name="Holden M.T.G."/>
            <person name="Scott A."/>
            <person name="Cherevach I."/>
            <person name="Chillingworth T."/>
            <person name="Churcher C."/>
            <person name="Cronin A."/>
            <person name="Dowd L."/>
            <person name="Feltwell T."/>
            <person name="Hamlin N."/>
            <person name="Holroyd S."/>
            <person name="Jagels K."/>
            <person name="Moule S."/>
            <person name="Mungall K."/>
            <person name="Quail M.A."/>
            <person name="Price C."/>
            <person name="Rabbinowitsch E."/>
            <person name="Sharp S."/>
            <person name="Skelton J."/>
            <person name="Whitehead S."/>
            <person name="Barrell B.G."/>
            <person name="Kehoe M."/>
            <person name="Parkhill J."/>
        </authorList>
    </citation>
    <scope>NUCLEOTIDE SEQUENCE [LARGE SCALE GENOMIC DNA]</scope>
    <source>
        <strain>Manfredo</strain>
    </source>
</reference>
<keyword id="KW-0963">Cytoplasm</keyword>
<keyword id="KW-0251">Elongation factor</keyword>
<keyword id="KW-0342">GTP-binding</keyword>
<keyword id="KW-0378">Hydrolase</keyword>
<keyword id="KW-0460">Magnesium</keyword>
<keyword id="KW-0479">Metal-binding</keyword>
<keyword id="KW-0547">Nucleotide-binding</keyword>
<keyword id="KW-0648">Protein biosynthesis</keyword>
<comment type="function">
    <text evidence="2">GTP hydrolase that promotes the GTP-dependent binding of aminoacyl-tRNA to the A-site of ribosomes during protein biosynthesis.</text>
</comment>
<comment type="catalytic activity">
    <reaction evidence="2">
        <text>GTP + H2O = GDP + phosphate + H(+)</text>
        <dbReference type="Rhea" id="RHEA:19669"/>
        <dbReference type="ChEBI" id="CHEBI:15377"/>
        <dbReference type="ChEBI" id="CHEBI:15378"/>
        <dbReference type="ChEBI" id="CHEBI:37565"/>
        <dbReference type="ChEBI" id="CHEBI:43474"/>
        <dbReference type="ChEBI" id="CHEBI:58189"/>
        <dbReference type="EC" id="3.6.5.3"/>
    </reaction>
    <physiologicalReaction direction="left-to-right" evidence="2">
        <dbReference type="Rhea" id="RHEA:19670"/>
    </physiologicalReaction>
</comment>
<comment type="subunit">
    <text evidence="2">Monomer.</text>
</comment>
<comment type="subcellular location">
    <subcellularLocation>
        <location evidence="2">Cytoplasm</location>
    </subcellularLocation>
</comment>
<comment type="similarity">
    <text evidence="2">Belongs to the TRAFAC class translation factor GTPase superfamily. Classic translation factor GTPase family. EF-Tu/EF-1A subfamily.</text>
</comment>
<feature type="chain" id="PRO_1000015759" description="Elongation factor Tu">
    <location>
        <begin position="1"/>
        <end position="398"/>
    </location>
</feature>
<feature type="domain" description="tr-type G">
    <location>
        <begin position="10"/>
        <end position="207"/>
    </location>
</feature>
<feature type="region of interest" description="G1" evidence="1">
    <location>
        <begin position="19"/>
        <end position="26"/>
    </location>
</feature>
<feature type="region of interest" description="G2" evidence="1">
    <location>
        <begin position="63"/>
        <end position="67"/>
    </location>
</feature>
<feature type="region of interest" description="G3" evidence="1">
    <location>
        <begin position="84"/>
        <end position="87"/>
    </location>
</feature>
<feature type="region of interest" description="G4" evidence="1">
    <location>
        <begin position="139"/>
        <end position="142"/>
    </location>
</feature>
<feature type="region of interest" description="G5" evidence="1">
    <location>
        <begin position="177"/>
        <end position="179"/>
    </location>
</feature>
<feature type="binding site" evidence="2">
    <location>
        <begin position="19"/>
        <end position="26"/>
    </location>
    <ligand>
        <name>GTP</name>
        <dbReference type="ChEBI" id="CHEBI:37565"/>
    </ligand>
</feature>
<feature type="binding site" evidence="2">
    <location>
        <position position="26"/>
    </location>
    <ligand>
        <name>Mg(2+)</name>
        <dbReference type="ChEBI" id="CHEBI:18420"/>
    </ligand>
</feature>
<feature type="binding site" evidence="2">
    <location>
        <begin position="84"/>
        <end position="88"/>
    </location>
    <ligand>
        <name>GTP</name>
        <dbReference type="ChEBI" id="CHEBI:37565"/>
    </ligand>
</feature>
<feature type="binding site" evidence="2">
    <location>
        <begin position="139"/>
        <end position="142"/>
    </location>
    <ligand>
        <name>GTP</name>
        <dbReference type="ChEBI" id="CHEBI:37565"/>
    </ligand>
</feature>
<sequence>MAKEKYDRSKPHVNIGTIGHVDHGKTTLTAAITTVLARRLPSSVNQPKDYASIDAAPEERERGITINTAHVEYETATRHYAHIDAPGHADYVKNMITGAAQMDGAILVVASTDGPMPQTREHILLSRQVGVKHLIVFMNKVDLVDDEELLELVEMEIRDLLSEYDFPGDDLPVIQGSALKALEGDTKFEDIIMELMDTVDSYIPEPERDTDKPLLLPVEDVFSITGRGTVASGRIDRGTVRVNDEIEIVGIKEETKKAVVTGVEMFRKQLDEGLAGDNVGILLRGVQRDEIERGQVIAKPGSINPHTKFKGEVYILSKDEGGRHTPFFNNYRPQFYFRTTDVTGSIELPAGTEMVMPGDNVTINVELIHPIAVEQGTTFSIREGGRTVGSGIVSEIEA</sequence>
<protein>
    <recommendedName>
        <fullName evidence="2">Elongation factor Tu</fullName>
        <shortName evidence="2">EF-Tu</shortName>
        <ecNumber evidence="2">3.6.5.3</ecNumber>
    </recommendedName>
</protein>
<proteinExistence type="inferred from homology"/>